<feature type="chain" id="PRO_0000177455" description="Large ribosomal subunit protein bL35">
    <location>
        <begin position="1"/>
        <end position="64"/>
    </location>
</feature>
<accession>Q7MK67</accession>
<proteinExistence type="inferred from homology"/>
<evidence type="ECO:0000255" key="1">
    <source>
        <dbReference type="HAMAP-Rule" id="MF_00514"/>
    </source>
</evidence>
<evidence type="ECO:0000305" key="2"/>
<gene>
    <name evidence="1" type="primary">rpmI</name>
    <name type="ordered locus">VV1943</name>
</gene>
<comment type="similarity">
    <text evidence="1">Belongs to the bacterial ribosomal protein bL35 family.</text>
</comment>
<comment type="sequence caution" evidence="2">
    <conflict type="erroneous initiation">
        <sequence resource="EMBL-CDS" id="BAC94707"/>
    </conflict>
</comment>
<keyword id="KW-0687">Ribonucleoprotein</keyword>
<keyword id="KW-0689">Ribosomal protein</keyword>
<dbReference type="EMBL" id="BA000037">
    <property type="protein sequence ID" value="BAC94707.1"/>
    <property type="status" value="ALT_INIT"/>
    <property type="molecule type" value="Genomic_DNA"/>
</dbReference>
<dbReference type="RefSeq" id="WP_011080265.1">
    <property type="nucleotide sequence ID" value="NC_005139.1"/>
</dbReference>
<dbReference type="SMR" id="Q7MK67"/>
<dbReference type="STRING" id="672.VV93_v1c17030"/>
<dbReference type="GeneID" id="93896587"/>
<dbReference type="KEGG" id="vvy:VV1943"/>
<dbReference type="eggNOG" id="COG0291">
    <property type="taxonomic scope" value="Bacteria"/>
</dbReference>
<dbReference type="HOGENOM" id="CLU_169643_1_1_6"/>
<dbReference type="Proteomes" id="UP000002675">
    <property type="component" value="Chromosome I"/>
</dbReference>
<dbReference type="GO" id="GO:0022625">
    <property type="term" value="C:cytosolic large ribosomal subunit"/>
    <property type="evidence" value="ECO:0007669"/>
    <property type="project" value="TreeGrafter"/>
</dbReference>
<dbReference type="GO" id="GO:0003735">
    <property type="term" value="F:structural constituent of ribosome"/>
    <property type="evidence" value="ECO:0007669"/>
    <property type="project" value="InterPro"/>
</dbReference>
<dbReference type="GO" id="GO:0006412">
    <property type="term" value="P:translation"/>
    <property type="evidence" value="ECO:0007669"/>
    <property type="project" value="UniProtKB-UniRule"/>
</dbReference>
<dbReference type="FunFam" id="4.10.410.60:FF:000001">
    <property type="entry name" value="50S ribosomal protein L35"/>
    <property type="match status" value="1"/>
</dbReference>
<dbReference type="Gene3D" id="4.10.410.60">
    <property type="match status" value="1"/>
</dbReference>
<dbReference type="HAMAP" id="MF_00514">
    <property type="entry name" value="Ribosomal_bL35"/>
    <property type="match status" value="1"/>
</dbReference>
<dbReference type="InterPro" id="IPR001706">
    <property type="entry name" value="Ribosomal_bL35"/>
</dbReference>
<dbReference type="InterPro" id="IPR021137">
    <property type="entry name" value="Ribosomal_bL35-like"/>
</dbReference>
<dbReference type="InterPro" id="IPR018265">
    <property type="entry name" value="Ribosomal_bL35_CS"/>
</dbReference>
<dbReference type="InterPro" id="IPR037229">
    <property type="entry name" value="Ribosomal_bL35_sf"/>
</dbReference>
<dbReference type="NCBIfam" id="TIGR00001">
    <property type="entry name" value="rpmI_bact"/>
    <property type="match status" value="1"/>
</dbReference>
<dbReference type="PANTHER" id="PTHR33343">
    <property type="entry name" value="54S RIBOSOMAL PROTEIN BL35M"/>
    <property type="match status" value="1"/>
</dbReference>
<dbReference type="PANTHER" id="PTHR33343:SF1">
    <property type="entry name" value="LARGE RIBOSOMAL SUBUNIT PROTEIN BL35M"/>
    <property type="match status" value="1"/>
</dbReference>
<dbReference type="Pfam" id="PF01632">
    <property type="entry name" value="Ribosomal_L35p"/>
    <property type="match status" value="1"/>
</dbReference>
<dbReference type="PRINTS" id="PR00064">
    <property type="entry name" value="RIBOSOMALL35"/>
</dbReference>
<dbReference type="SUPFAM" id="SSF143034">
    <property type="entry name" value="L35p-like"/>
    <property type="match status" value="1"/>
</dbReference>
<dbReference type="PROSITE" id="PS00936">
    <property type="entry name" value="RIBOSOMAL_L35"/>
    <property type="match status" value="1"/>
</dbReference>
<protein>
    <recommendedName>
        <fullName evidence="1">Large ribosomal subunit protein bL35</fullName>
    </recommendedName>
    <alternativeName>
        <fullName evidence="2">50S ribosomal protein L35</fullName>
    </alternativeName>
</protein>
<organism>
    <name type="scientific">Vibrio vulnificus (strain YJ016)</name>
    <dbReference type="NCBI Taxonomy" id="196600"/>
    <lineage>
        <taxon>Bacteria</taxon>
        <taxon>Pseudomonadati</taxon>
        <taxon>Pseudomonadota</taxon>
        <taxon>Gammaproteobacteria</taxon>
        <taxon>Vibrionales</taxon>
        <taxon>Vibrionaceae</taxon>
        <taxon>Vibrio</taxon>
    </lineage>
</organism>
<name>RL35_VIBVY</name>
<sequence>MPKMKNNKGAAKRFKKTAGGIKYKHATKRHILTKRTTKNKRQLRPNSLLPRCEVAAVARMLPYA</sequence>
<reference key="1">
    <citation type="journal article" date="2003" name="Genome Res.">
        <title>Comparative genome analysis of Vibrio vulnificus, a marine pathogen.</title>
        <authorList>
            <person name="Chen C.-Y."/>
            <person name="Wu K.-M."/>
            <person name="Chang Y.-C."/>
            <person name="Chang C.-H."/>
            <person name="Tsai H.-C."/>
            <person name="Liao T.-L."/>
            <person name="Liu Y.-M."/>
            <person name="Chen H.-J."/>
            <person name="Shen A.B.-T."/>
            <person name="Li J.-C."/>
            <person name="Su T.-L."/>
            <person name="Shao C.-P."/>
            <person name="Lee C.-T."/>
            <person name="Hor L.-I."/>
            <person name="Tsai S.-F."/>
        </authorList>
    </citation>
    <scope>NUCLEOTIDE SEQUENCE [LARGE SCALE GENOMIC DNA]</scope>
    <source>
        <strain>YJ016</strain>
    </source>
</reference>